<proteinExistence type="inferred from homology"/>
<comment type="function">
    <text evidence="1">This is one of the proteins that bind and probably mediate the attachment of the 5S RNA into the large ribosomal subunit, where it forms part of the central protuberance. In the 70S ribosome it contacts protein S13 of the 30S subunit (bridge B1b), connecting the 2 subunits; this bridge is implicated in subunit movement. Contacts the P site tRNA; the 5S rRNA and some of its associated proteins might help stabilize positioning of ribosome-bound tRNAs.</text>
</comment>
<comment type="subunit">
    <text evidence="1">Part of the 50S ribosomal subunit; part of the 5S rRNA/L5/L18/L25 subcomplex. Contacts the 5S rRNA and the P site tRNA. Forms a bridge to the 30S subunit in the 70S ribosome.</text>
</comment>
<comment type="similarity">
    <text evidence="1">Belongs to the universal ribosomal protein uL5 family.</text>
</comment>
<gene>
    <name evidence="1" type="primary">rplE</name>
    <name type="ordered locus">NFA_7760</name>
</gene>
<accession>Q5Z1S0</accession>
<evidence type="ECO:0000255" key="1">
    <source>
        <dbReference type="HAMAP-Rule" id="MF_01333"/>
    </source>
</evidence>
<evidence type="ECO:0000305" key="2"/>
<keyword id="KW-1185">Reference proteome</keyword>
<keyword id="KW-0687">Ribonucleoprotein</keyword>
<keyword id="KW-0689">Ribosomal protein</keyword>
<keyword id="KW-0694">RNA-binding</keyword>
<keyword id="KW-0699">rRNA-binding</keyword>
<keyword id="KW-0820">tRNA-binding</keyword>
<organism>
    <name type="scientific">Nocardia farcinica (strain IFM 10152)</name>
    <dbReference type="NCBI Taxonomy" id="247156"/>
    <lineage>
        <taxon>Bacteria</taxon>
        <taxon>Bacillati</taxon>
        <taxon>Actinomycetota</taxon>
        <taxon>Actinomycetes</taxon>
        <taxon>Mycobacteriales</taxon>
        <taxon>Nocardiaceae</taxon>
        <taxon>Nocardia</taxon>
    </lineage>
</organism>
<sequence>MTTTEKIQPRLKVRYREEIKDALAKEFNYANVMQIPGVVKVVVNMGVGDAARDAKLINGAVEDLALITGQKPQIRKATKSIAQFKLREGMPIGAKVTLRGDRMWEFLDRLVSIALPRIRDFRGLSPKQFDGNGNYTFGLSEQSMFHEIDVDKIDRPRGMDITVVTTATNNEEGRALLKHLGFPFKEN</sequence>
<reference key="1">
    <citation type="journal article" date="2004" name="Proc. Natl. Acad. Sci. U.S.A.">
        <title>The complete genomic sequence of Nocardia farcinica IFM 10152.</title>
        <authorList>
            <person name="Ishikawa J."/>
            <person name="Yamashita A."/>
            <person name="Mikami Y."/>
            <person name="Hoshino Y."/>
            <person name="Kurita H."/>
            <person name="Hotta K."/>
            <person name="Shiba T."/>
            <person name="Hattori M."/>
        </authorList>
    </citation>
    <scope>NUCLEOTIDE SEQUENCE [LARGE SCALE GENOMIC DNA]</scope>
    <source>
        <strain>IFM 10152</strain>
    </source>
</reference>
<dbReference type="EMBL" id="AP006618">
    <property type="protein sequence ID" value="BAD55621.1"/>
    <property type="molecule type" value="Genomic_DNA"/>
</dbReference>
<dbReference type="RefSeq" id="WP_011207307.1">
    <property type="nucleotide sequence ID" value="NC_006361.1"/>
</dbReference>
<dbReference type="SMR" id="Q5Z1S0"/>
<dbReference type="STRING" id="247156.NFA_7760"/>
<dbReference type="GeneID" id="61131608"/>
<dbReference type="KEGG" id="nfa:NFA_7760"/>
<dbReference type="eggNOG" id="COG0094">
    <property type="taxonomic scope" value="Bacteria"/>
</dbReference>
<dbReference type="HOGENOM" id="CLU_061015_2_1_11"/>
<dbReference type="OrthoDB" id="9806626at2"/>
<dbReference type="Proteomes" id="UP000006820">
    <property type="component" value="Chromosome"/>
</dbReference>
<dbReference type="GO" id="GO:1990904">
    <property type="term" value="C:ribonucleoprotein complex"/>
    <property type="evidence" value="ECO:0007669"/>
    <property type="project" value="UniProtKB-KW"/>
</dbReference>
<dbReference type="GO" id="GO:0005840">
    <property type="term" value="C:ribosome"/>
    <property type="evidence" value="ECO:0007669"/>
    <property type="project" value="UniProtKB-KW"/>
</dbReference>
<dbReference type="GO" id="GO:0019843">
    <property type="term" value="F:rRNA binding"/>
    <property type="evidence" value="ECO:0007669"/>
    <property type="project" value="UniProtKB-UniRule"/>
</dbReference>
<dbReference type="GO" id="GO:0003735">
    <property type="term" value="F:structural constituent of ribosome"/>
    <property type="evidence" value="ECO:0007669"/>
    <property type="project" value="InterPro"/>
</dbReference>
<dbReference type="GO" id="GO:0000049">
    <property type="term" value="F:tRNA binding"/>
    <property type="evidence" value="ECO:0007669"/>
    <property type="project" value="UniProtKB-UniRule"/>
</dbReference>
<dbReference type="GO" id="GO:0006412">
    <property type="term" value="P:translation"/>
    <property type="evidence" value="ECO:0007669"/>
    <property type="project" value="UniProtKB-UniRule"/>
</dbReference>
<dbReference type="FunFam" id="3.30.1440.10:FF:000001">
    <property type="entry name" value="50S ribosomal protein L5"/>
    <property type="match status" value="1"/>
</dbReference>
<dbReference type="Gene3D" id="3.30.1440.10">
    <property type="match status" value="1"/>
</dbReference>
<dbReference type="HAMAP" id="MF_01333_B">
    <property type="entry name" value="Ribosomal_uL5_B"/>
    <property type="match status" value="1"/>
</dbReference>
<dbReference type="InterPro" id="IPR002132">
    <property type="entry name" value="Ribosomal_uL5"/>
</dbReference>
<dbReference type="InterPro" id="IPR020930">
    <property type="entry name" value="Ribosomal_uL5_bac-type"/>
</dbReference>
<dbReference type="InterPro" id="IPR031309">
    <property type="entry name" value="Ribosomal_uL5_C"/>
</dbReference>
<dbReference type="InterPro" id="IPR022803">
    <property type="entry name" value="Ribosomal_uL5_dom_sf"/>
</dbReference>
<dbReference type="InterPro" id="IPR031310">
    <property type="entry name" value="Ribosomal_uL5_N"/>
</dbReference>
<dbReference type="NCBIfam" id="NF000585">
    <property type="entry name" value="PRK00010.1"/>
    <property type="match status" value="1"/>
</dbReference>
<dbReference type="PANTHER" id="PTHR11994">
    <property type="entry name" value="60S RIBOSOMAL PROTEIN L11-RELATED"/>
    <property type="match status" value="1"/>
</dbReference>
<dbReference type="Pfam" id="PF00281">
    <property type="entry name" value="Ribosomal_L5"/>
    <property type="match status" value="1"/>
</dbReference>
<dbReference type="Pfam" id="PF00673">
    <property type="entry name" value="Ribosomal_L5_C"/>
    <property type="match status" value="1"/>
</dbReference>
<dbReference type="PIRSF" id="PIRSF002161">
    <property type="entry name" value="Ribosomal_L5"/>
    <property type="match status" value="1"/>
</dbReference>
<dbReference type="SUPFAM" id="SSF55282">
    <property type="entry name" value="RL5-like"/>
    <property type="match status" value="1"/>
</dbReference>
<feature type="chain" id="PRO_0000243032" description="Large ribosomal subunit protein uL5">
    <location>
        <begin position="1"/>
        <end position="187"/>
    </location>
</feature>
<protein>
    <recommendedName>
        <fullName evidence="1">Large ribosomal subunit protein uL5</fullName>
    </recommendedName>
    <alternativeName>
        <fullName evidence="2">50S ribosomal protein L5</fullName>
    </alternativeName>
</protein>
<name>RL5_NOCFA</name>